<evidence type="ECO:0000255" key="1">
    <source>
        <dbReference type="HAMAP-Rule" id="MF_01445"/>
    </source>
</evidence>
<accession>Q8UC47</accession>
<accession>Q7CWJ8</accession>
<proteinExistence type="inferred from homology"/>
<protein>
    <recommendedName>
        <fullName evidence="1">tRNA N6-adenosine threonylcarbamoyltransferase</fullName>
        <ecNumber evidence="1">2.3.1.234</ecNumber>
    </recommendedName>
    <alternativeName>
        <fullName evidence="1">N6-L-threonylcarbamoyladenine synthase</fullName>
        <shortName evidence="1">t(6)A synthase</shortName>
    </alternativeName>
    <alternativeName>
        <fullName evidence="1">t(6)A37 threonylcarbamoyladenosine biosynthesis protein TsaD</fullName>
    </alternativeName>
    <alternativeName>
        <fullName evidence="1">tRNA threonylcarbamoyladenosine biosynthesis protein TsaD</fullName>
    </alternativeName>
</protein>
<feature type="chain" id="PRO_0000303249" description="tRNA N6-adenosine threonylcarbamoyltransferase">
    <location>
        <begin position="1"/>
        <end position="365"/>
    </location>
</feature>
<feature type="binding site" evidence="1">
    <location>
        <position position="119"/>
    </location>
    <ligand>
        <name>Fe cation</name>
        <dbReference type="ChEBI" id="CHEBI:24875"/>
    </ligand>
</feature>
<feature type="binding site" evidence="1">
    <location>
        <position position="123"/>
    </location>
    <ligand>
        <name>Fe cation</name>
        <dbReference type="ChEBI" id="CHEBI:24875"/>
    </ligand>
</feature>
<feature type="binding site" evidence="1">
    <location>
        <begin position="141"/>
        <end position="145"/>
    </location>
    <ligand>
        <name>substrate</name>
    </ligand>
</feature>
<feature type="binding site" evidence="1">
    <location>
        <position position="174"/>
    </location>
    <ligand>
        <name>substrate</name>
    </ligand>
</feature>
<feature type="binding site" evidence="1">
    <location>
        <position position="187"/>
    </location>
    <ligand>
        <name>substrate</name>
    </ligand>
</feature>
<feature type="binding site" evidence="1">
    <location>
        <position position="288"/>
    </location>
    <ligand>
        <name>substrate</name>
    </ligand>
</feature>
<feature type="binding site" evidence="1">
    <location>
        <position position="316"/>
    </location>
    <ligand>
        <name>Fe cation</name>
        <dbReference type="ChEBI" id="CHEBI:24875"/>
    </ligand>
</feature>
<sequence>MPPFLRILGIETSCDETAASIVVRHADGRGEIVSDVVLSQLEEHSAYGGVVPEIAARAHVEALDTLVEEALDQAGVKLADVDAIAATSGPGLIGGLLVGLMTGKAIAKAAGKPLYAINHLEGHALTARLTDGLSFPYLMLLVSGGHTQLVLVRGVGEYERWGTTIDDALGEAFDKTAKLLGLPYPGGPAVENAAAKGDPDRFPLPRPMVGEARLDFSFSGLKTAVRQAATAIAPLSEQDIADICASFQKAVSRTLKDRIGRGLARFKVEFPHINGEPALVVAGGVAANQEIRQTLQALCDTHGFRFVAPPHRLCTDNAAMIAWAGLERMAEGRQADALEVAPRSRWPLDGSAETLIGFGKRGAKA</sequence>
<name>TSAD_AGRFC</name>
<reference key="1">
    <citation type="journal article" date="2001" name="Science">
        <title>The genome of the natural genetic engineer Agrobacterium tumefaciens C58.</title>
        <authorList>
            <person name="Wood D.W."/>
            <person name="Setubal J.C."/>
            <person name="Kaul R."/>
            <person name="Monks D.E."/>
            <person name="Kitajima J.P."/>
            <person name="Okura V.K."/>
            <person name="Zhou Y."/>
            <person name="Chen L."/>
            <person name="Wood G.E."/>
            <person name="Almeida N.F. Jr."/>
            <person name="Woo L."/>
            <person name="Chen Y."/>
            <person name="Paulsen I.T."/>
            <person name="Eisen J.A."/>
            <person name="Karp P.D."/>
            <person name="Bovee D. Sr."/>
            <person name="Chapman P."/>
            <person name="Clendenning J."/>
            <person name="Deatherage G."/>
            <person name="Gillet W."/>
            <person name="Grant C."/>
            <person name="Kutyavin T."/>
            <person name="Levy R."/>
            <person name="Li M.-J."/>
            <person name="McClelland E."/>
            <person name="Palmieri A."/>
            <person name="Raymond C."/>
            <person name="Rouse G."/>
            <person name="Saenphimmachak C."/>
            <person name="Wu Z."/>
            <person name="Romero P."/>
            <person name="Gordon D."/>
            <person name="Zhang S."/>
            <person name="Yoo H."/>
            <person name="Tao Y."/>
            <person name="Biddle P."/>
            <person name="Jung M."/>
            <person name="Krespan W."/>
            <person name="Perry M."/>
            <person name="Gordon-Kamm B."/>
            <person name="Liao L."/>
            <person name="Kim S."/>
            <person name="Hendrick C."/>
            <person name="Zhao Z.-Y."/>
            <person name="Dolan M."/>
            <person name="Chumley F."/>
            <person name="Tingey S.V."/>
            <person name="Tomb J.-F."/>
            <person name="Gordon M.P."/>
            <person name="Olson M.V."/>
            <person name="Nester E.W."/>
        </authorList>
    </citation>
    <scope>NUCLEOTIDE SEQUENCE [LARGE SCALE GENOMIC DNA]</scope>
    <source>
        <strain>C58 / ATCC 33970</strain>
    </source>
</reference>
<reference key="2">
    <citation type="journal article" date="2001" name="Science">
        <title>Genome sequence of the plant pathogen and biotechnology agent Agrobacterium tumefaciens C58.</title>
        <authorList>
            <person name="Goodner B."/>
            <person name="Hinkle G."/>
            <person name="Gattung S."/>
            <person name="Miller N."/>
            <person name="Blanchard M."/>
            <person name="Qurollo B."/>
            <person name="Goldman B.S."/>
            <person name="Cao Y."/>
            <person name="Askenazi M."/>
            <person name="Halling C."/>
            <person name="Mullin L."/>
            <person name="Houmiel K."/>
            <person name="Gordon J."/>
            <person name="Vaudin M."/>
            <person name="Iartchouk O."/>
            <person name="Epp A."/>
            <person name="Liu F."/>
            <person name="Wollam C."/>
            <person name="Allinger M."/>
            <person name="Doughty D."/>
            <person name="Scott C."/>
            <person name="Lappas C."/>
            <person name="Markelz B."/>
            <person name="Flanagan C."/>
            <person name="Crowell C."/>
            <person name="Gurson J."/>
            <person name="Lomo C."/>
            <person name="Sear C."/>
            <person name="Strub G."/>
            <person name="Cielo C."/>
            <person name="Slater S."/>
        </authorList>
    </citation>
    <scope>NUCLEOTIDE SEQUENCE [LARGE SCALE GENOMIC DNA]</scope>
    <source>
        <strain>C58 / ATCC 33970</strain>
    </source>
</reference>
<keyword id="KW-0012">Acyltransferase</keyword>
<keyword id="KW-0963">Cytoplasm</keyword>
<keyword id="KW-0408">Iron</keyword>
<keyword id="KW-0479">Metal-binding</keyword>
<keyword id="KW-1185">Reference proteome</keyword>
<keyword id="KW-0808">Transferase</keyword>
<keyword id="KW-0819">tRNA processing</keyword>
<organism>
    <name type="scientific">Agrobacterium fabrum (strain C58 / ATCC 33970)</name>
    <name type="common">Agrobacterium tumefaciens (strain C58)</name>
    <dbReference type="NCBI Taxonomy" id="176299"/>
    <lineage>
        <taxon>Bacteria</taxon>
        <taxon>Pseudomonadati</taxon>
        <taxon>Pseudomonadota</taxon>
        <taxon>Alphaproteobacteria</taxon>
        <taxon>Hyphomicrobiales</taxon>
        <taxon>Rhizobiaceae</taxon>
        <taxon>Rhizobium/Agrobacterium group</taxon>
        <taxon>Agrobacterium</taxon>
        <taxon>Agrobacterium tumefaciens complex</taxon>
    </lineage>
</organism>
<gene>
    <name evidence="1" type="primary">tsaD</name>
    <name type="synonym">gcp</name>
    <name type="ordered locus">Atu2651</name>
    <name type="ORF">AGR_C_4806</name>
</gene>
<dbReference type="EC" id="2.3.1.234" evidence="1"/>
<dbReference type="EMBL" id="AE007869">
    <property type="protein sequence ID" value="AAK88373.2"/>
    <property type="molecule type" value="Genomic_DNA"/>
</dbReference>
<dbReference type="PIR" id="AB2902">
    <property type="entry name" value="AB2902"/>
</dbReference>
<dbReference type="PIR" id="D97677">
    <property type="entry name" value="D97677"/>
</dbReference>
<dbReference type="RefSeq" id="NP_355588.2">
    <property type="nucleotide sequence ID" value="NC_003062.2"/>
</dbReference>
<dbReference type="RefSeq" id="WP_010972465.1">
    <property type="nucleotide sequence ID" value="NC_003062.2"/>
</dbReference>
<dbReference type="SMR" id="Q8UC47"/>
<dbReference type="STRING" id="176299.Atu2651"/>
<dbReference type="EnsemblBacteria" id="AAK88373">
    <property type="protein sequence ID" value="AAK88373"/>
    <property type="gene ID" value="Atu2651"/>
</dbReference>
<dbReference type="GeneID" id="1134689"/>
<dbReference type="KEGG" id="atu:Atu2651"/>
<dbReference type="PATRIC" id="fig|176299.10.peg.2656"/>
<dbReference type="eggNOG" id="COG0533">
    <property type="taxonomic scope" value="Bacteria"/>
</dbReference>
<dbReference type="HOGENOM" id="CLU_023208_0_2_5"/>
<dbReference type="OrthoDB" id="9806197at2"/>
<dbReference type="PhylomeDB" id="Q8UC47"/>
<dbReference type="BioCyc" id="AGRO:ATU2651-MONOMER"/>
<dbReference type="Proteomes" id="UP000000813">
    <property type="component" value="Chromosome circular"/>
</dbReference>
<dbReference type="GO" id="GO:0005737">
    <property type="term" value="C:cytoplasm"/>
    <property type="evidence" value="ECO:0007669"/>
    <property type="project" value="UniProtKB-SubCell"/>
</dbReference>
<dbReference type="GO" id="GO:0005506">
    <property type="term" value="F:iron ion binding"/>
    <property type="evidence" value="ECO:0007669"/>
    <property type="project" value="UniProtKB-UniRule"/>
</dbReference>
<dbReference type="GO" id="GO:0061711">
    <property type="term" value="F:N(6)-L-threonylcarbamoyladenine synthase activity"/>
    <property type="evidence" value="ECO:0007669"/>
    <property type="project" value="UniProtKB-EC"/>
</dbReference>
<dbReference type="GO" id="GO:0002949">
    <property type="term" value="P:tRNA threonylcarbamoyladenosine modification"/>
    <property type="evidence" value="ECO:0007669"/>
    <property type="project" value="UniProtKB-UniRule"/>
</dbReference>
<dbReference type="CDD" id="cd24133">
    <property type="entry name" value="ASKHA_NBD_TsaD_bac"/>
    <property type="match status" value="1"/>
</dbReference>
<dbReference type="FunFam" id="3.30.420.40:FF:000012">
    <property type="entry name" value="tRNA N6-adenosine threonylcarbamoyltransferase"/>
    <property type="match status" value="1"/>
</dbReference>
<dbReference type="FunFam" id="3.30.420.40:FF:000040">
    <property type="entry name" value="tRNA N6-adenosine threonylcarbamoyltransferase"/>
    <property type="match status" value="1"/>
</dbReference>
<dbReference type="Gene3D" id="3.30.420.40">
    <property type="match status" value="2"/>
</dbReference>
<dbReference type="HAMAP" id="MF_01445">
    <property type="entry name" value="TsaD"/>
    <property type="match status" value="1"/>
</dbReference>
<dbReference type="InterPro" id="IPR043129">
    <property type="entry name" value="ATPase_NBD"/>
</dbReference>
<dbReference type="InterPro" id="IPR000905">
    <property type="entry name" value="Gcp-like_dom"/>
</dbReference>
<dbReference type="InterPro" id="IPR017861">
    <property type="entry name" value="KAE1/TsaD"/>
</dbReference>
<dbReference type="InterPro" id="IPR022450">
    <property type="entry name" value="TsaD"/>
</dbReference>
<dbReference type="NCBIfam" id="TIGR00329">
    <property type="entry name" value="gcp_kae1"/>
    <property type="match status" value="1"/>
</dbReference>
<dbReference type="NCBIfam" id="TIGR03723">
    <property type="entry name" value="T6A_TsaD_YgjD"/>
    <property type="match status" value="1"/>
</dbReference>
<dbReference type="PANTHER" id="PTHR11735">
    <property type="entry name" value="TRNA N6-ADENOSINE THREONYLCARBAMOYLTRANSFERASE"/>
    <property type="match status" value="1"/>
</dbReference>
<dbReference type="PANTHER" id="PTHR11735:SF6">
    <property type="entry name" value="TRNA N6-ADENOSINE THREONYLCARBAMOYLTRANSFERASE, MITOCHONDRIAL"/>
    <property type="match status" value="1"/>
</dbReference>
<dbReference type="Pfam" id="PF00814">
    <property type="entry name" value="TsaD"/>
    <property type="match status" value="1"/>
</dbReference>
<dbReference type="PRINTS" id="PR00789">
    <property type="entry name" value="OSIALOPTASE"/>
</dbReference>
<dbReference type="SUPFAM" id="SSF53067">
    <property type="entry name" value="Actin-like ATPase domain"/>
    <property type="match status" value="2"/>
</dbReference>
<comment type="function">
    <text evidence="1">Required for the formation of a threonylcarbamoyl group on adenosine at position 37 (t(6)A37) in tRNAs that read codons beginning with adenine. Is involved in the transfer of the threonylcarbamoyl moiety of threonylcarbamoyl-AMP (TC-AMP) to the N6 group of A37, together with TsaE and TsaB. TsaD likely plays a direct catalytic role in this reaction.</text>
</comment>
<comment type="catalytic activity">
    <reaction evidence="1">
        <text>L-threonylcarbamoyladenylate + adenosine(37) in tRNA = N(6)-L-threonylcarbamoyladenosine(37) in tRNA + AMP + H(+)</text>
        <dbReference type="Rhea" id="RHEA:37059"/>
        <dbReference type="Rhea" id="RHEA-COMP:10162"/>
        <dbReference type="Rhea" id="RHEA-COMP:10163"/>
        <dbReference type="ChEBI" id="CHEBI:15378"/>
        <dbReference type="ChEBI" id="CHEBI:73682"/>
        <dbReference type="ChEBI" id="CHEBI:74411"/>
        <dbReference type="ChEBI" id="CHEBI:74418"/>
        <dbReference type="ChEBI" id="CHEBI:456215"/>
        <dbReference type="EC" id="2.3.1.234"/>
    </reaction>
</comment>
<comment type="cofactor">
    <cofactor evidence="1">
        <name>Fe(2+)</name>
        <dbReference type="ChEBI" id="CHEBI:29033"/>
    </cofactor>
    <text evidence="1">Binds 1 Fe(2+) ion per subunit.</text>
</comment>
<comment type="subcellular location">
    <subcellularLocation>
        <location evidence="1">Cytoplasm</location>
    </subcellularLocation>
</comment>
<comment type="similarity">
    <text evidence="1">Belongs to the KAE1 / TsaD family.</text>
</comment>